<sequence>MPIIRRTSRATASSSKSATSSILRQAILVFTGFLLGALFMVFVPSLYNAAEPSSLHRLMNPIRRNTLSARASSDILKLGNPGPVSDLLERSGYILSYNRRDRLAHWVGEHLTSASLQAGQGVDRDKSNFQEDTDIPEMFRAHLKDYVSSGYDRGHQAPAADDLSSQEAMDETFLLSNMAPQVGVGFNRHYWAYLEGFMRDLTQNFTDVYVYTGPLFLPSAASTGRKNPAYSIEYPFLGATTPNVPVPTHFFKIALTTTASSEYALGAFVLPNQAIDSSTPLTNFKVELEAIEKAAGLVFFDKLDRSKFADLCSKTTCQVR</sequence>
<protein>
    <recommendedName>
        <fullName>Nuclease</fullName>
        <ecNumber>3.1.30.-</ecNumber>
    </recommendedName>
    <alternativeName>
        <fullName>Sr-nuclease</fullName>
    </alternativeName>
</protein>
<accession>P81204</accession>
<accession>Q9UVC4</accession>
<reference key="1">
    <citation type="journal article" date="1999" name="Biochem. J.">
        <title>Protein structure and gene cloning of Syncephalastrum racemosum nuclease.</title>
        <authorList>
            <person name="Ho H.-C."/>
            <person name="Liao T.-H."/>
        </authorList>
    </citation>
    <scope>NUCLEOTIDE SEQUENCE [MRNA]</scope>
    <scope>PROTEIN SEQUENCE OF 71-320</scope>
    <scope>MUTAGENESIS OF HIS-155</scope>
</reference>
<reference key="2">
    <citation type="journal article" date="1993" name="Arch. Biochem. Biophys.">
        <title>Deoxyribonuclease of Syncephalastrum racemosum -- enzymatic properties and molecular structure.</title>
        <authorList>
            <person name="Chen L.-Y."/>
            <person name="Ho H.-C."/>
            <person name="Tsai Y.-C."/>
            <person name="Liao T.-H."/>
        </authorList>
    </citation>
    <scope>PROTEIN SEQUENCE OF 71-110 AND 145-153</scope>
    <scope>COFACTOR</scope>
    <scope>SUBUNIT</scope>
    <scope>GLYCOSYLATION</scope>
</reference>
<organism>
    <name type="scientific">Syncephalastrum racemosum</name>
    <name type="common">Filamentous fungus</name>
    <dbReference type="NCBI Taxonomy" id="13706"/>
    <lineage>
        <taxon>Eukaryota</taxon>
        <taxon>Fungi</taxon>
        <taxon>Fungi incertae sedis</taxon>
        <taxon>Mucoromycota</taxon>
        <taxon>Mucoromycotina</taxon>
        <taxon>Mucoromycetes</taxon>
        <taxon>Mucorales</taxon>
        <taxon>Syncephalastraceae</taxon>
        <taxon>Syncephalastrum</taxon>
    </lineage>
</organism>
<proteinExistence type="evidence at protein level"/>
<comment type="function">
    <text>This enzyme has both RNase and DNase activity.</text>
</comment>
<comment type="cofactor">
    <cofactor evidence="5">
        <name>Mg(2+)</name>
        <dbReference type="ChEBI" id="CHEBI:18420"/>
    </cofactor>
    <cofactor evidence="5">
        <name>Mn(2+)</name>
        <dbReference type="ChEBI" id="CHEBI:29035"/>
    </cofactor>
</comment>
<comment type="subunit">
    <text evidence="5">Homodimer; as a result of non-covalent interactions and not through the disulfide linkages between the two monomers.</text>
</comment>
<comment type="subcellular location">
    <subcellularLocation>
        <location>Secreted</location>
    </subcellularLocation>
</comment>
<comment type="PTM">
    <text evidence="5">Glycosylated.</text>
</comment>
<comment type="miscellaneous">
    <text evidence="1">The active site contains 1 hydrated divalent metal cation that has only 1 direct interaction with the protein; all other interactions are via water molecules.</text>
</comment>
<comment type="similarity">
    <text evidence="6">Belongs to the DNA/RNA non-specific endonuclease family.</text>
</comment>
<feature type="signal peptide" evidence="2">
    <location>
        <begin position="1"/>
        <end status="unknown"/>
    </location>
</feature>
<feature type="propeptide" id="PRO_0000019922" evidence="4 5">
    <location>
        <begin status="unknown"/>
        <end position="70"/>
    </location>
</feature>
<feature type="chain" id="PRO_0000019923" description="Nuclease">
    <location>
        <begin position="71"/>
        <end position="320"/>
    </location>
</feature>
<feature type="active site" description="Proton acceptor" evidence="3">
    <location>
        <position position="155"/>
    </location>
</feature>
<feature type="binding site" evidence="1">
    <location>
        <position position="187"/>
    </location>
    <ligand>
        <name>Mg(2+)</name>
        <dbReference type="ChEBI" id="CHEBI:18420"/>
        <note>catalytic</note>
    </ligand>
</feature>
<feature type="glycosylation site" description="N-linked (GlcNAc...) asparagine" evidence="5">
    <location>
        <position position="204"/>
    </location>
</feature>
<feature type="disulfide bond">
    <location>
        <begin position="312"/>
        <end position="317"/>
    </location>
</feature>
<feature type="mutagenesis site" description="Loss of activity." evidence="4">
    <original>H</original>
    <variation>A</variation>
    <location>
        <position position="155"/>
    </location>
</feature>
<name>NUC1_SYNRA</name>
<evidence type="ECO:0000250" key="1"/>
<evidence type="ECO:0000255" key="2"/>
<evidence type="ECO:0000255" key="3">
    <source>
        <dbReference type="PROSITE-ProRule" id="PRU10047"/>
    </source>
</evidence>
<evidence type="ECO:0000269" key="4">
    <source>
    </source>
</evidence>
<evidence type="ECO:0000269" key="5">
    <source>
    </source>
</evidence>
<evidence type="ECO:0000305" key="6"/>
<keyword id="KW-0903">Direct protein sequencing</keyword>
<keyword id="KW-1015">Disulfide bond</keyword>
<keyword id="KW-0255">Endonuclease</keyword>
<keyword id="KW-0325">Glycoprotein</keyword>
<keyword id="KW-0378">Hydrolase</keyword>
<keyword id="KW-0460">Magnesium</keyword>
<keyword id="KW-0464">Manganese</keyword>
<keyword id="KW-0479">Metal-binding</keyword>
<keyword id="KW-0540">Nuclease</keyword>
<keyword id="KW-0964">Secreted</keyword>
<keyword id="KW-0732">Signal</keyword>
<dbReference type="EC" id="3.1.30.-"/>
<dbReference type="EMBL" id="AF043515">
    <property type="protein sequence ID" value="AAC69516.1"/>
    <property type="molecule type" value="mRNA"/>
</dbReference>
<dbReference type="EMBL" id="AF043727">
    <property type="protein sequence ID" value="AAF21658.1"/>
    <property type="molecule type" value="Genomic_DNA"/>
</dbReference>
<dbReference type="PIR" id="S33276">
    <property type="entry name" value="S33276"/>
</dbReference>
<dbReference type="SMR" id="P81204"/>
<dbReference type="iPTMnet" id="P81204"/>
<dbReference type="GO" id="GO:0005576">
    <property type="term" value="C:extracellular region"/>
    <property type="evidence" value="ECO:0007669"/>
    <property type="project" value="UniProtKB-SubCell"/>
</dbReference>
<dbReference type="GO" id="GO:0005743">
    <property type="term" value="C:mitochondrial inner membrane"/>
    <property type="evidence" value="ECO:0007669"/>
    <property type="project" value="TreeGrafter"/>
</dbReference>
<dbReference type="GO" id="GO:0005634">
    <property type="term" value="C:nucleus"/>
    <property type="evidence" value="ECO:0007669"/>
    <property type="project" value="TreeGrafter"/>
</dbReference>
<dbReference type="GO" id="GO:0046872">
    <property type="term" value="F:metal ion binding"/>
    <property type="evidence" value="ECO:0007669"/>
    <property type="project" value="UniProtKB-KW"/>
</dbReference>
<dbReference type="GO" id="GO:0003676">
    <property type="term" value="F:nucleic acid binding"/>
    <property type="evidence" value="ECO:0007669"/>
    <property type="project" value="InterPro"/>
</dbReference>
<dbReference type="GO" id="GO:0004521">
    <property type="term" value="F:RNA endonuclease activity"/>
    <property type="evidence" value="ECO:0007669"/>
    <property type="project" value="TreeGrafter"/>
</dbReference>
<dbReference type="GO" id="GO:0000014">
    <property type="term" value="F:single-stranded DNA endodeoxyribonuclease activity"/>
    <property type="evidence" value="ECO:0007669"/>
    <property type="project" value="TreeGrafter"/>
</dbReference>
<dbReference type="GO" id="GO:0006309">
    <property type="term" value="P:apoptotic DNA fragmentation"/>
    <property type="evidence" value="ECO:0007669"/>
    <property type="project" value="TreeGrafter"/>
</dbReference>
<dbReference type="CDD" id="cd00091">
    <property type="entry name" value="NUC"/>
    <property type="match status" value="1"/>
</dbReference>
<dbReference type="Gene3D" id="3.40.570.10">
    <property type="entry name" value="Extracellular Endonuclease, subunit A"/>
    <property type="match status" value="1"/>
</dbReference>
<dbReference type="InterPro" id="IPR018524">
    <property type="entry name" value="DNA/RNA_endonuclease_AS"/>
</dbReference>
<dbReference type="InterPro" id="IPR044929">
    <property type="entry name" value="DNA/RNA_non-sp_Endonuclease_sf"/>
</dbReference>
<dbReference type="InterPro" id="IPR001604">
    <property type="entry name" value="Endo_G_ENPP1-like_dom"/>
</dbReference>
<dbReference type="InterPro" id="IPR020821">
    <property type="entry name" value="ENPP1-3/EXOG-like_nuc-like"/>
</dbReference>
<dbReference type="InterPro" id="IPR044925">
    <property type="entry name" value="His-Me_finger_sf"/>
</dbReference>
<dbReference type="InterPro" id="IPR040255">
    <property type="entry name" value="Non-specific_endonuclease"/>
</dbReference>
<dbReference type="PANTHER" id="PTHR13966:SF5">
    <property type="entry name" value="ENDONUCLEASE G, MITOCHONDRIAL"/>
    <property type="match status" value="1"/>
</dbReference>
<dbReference type="PANTHER" id="PTHR13966">
    <property type="entry name" value="ENDONUCLEASE RELATED"/>
    <property type="match status" value="1"/>
</dbReference>
<dbReference type="Pfam" id="PF01223">
    <property type="entry name" value="Endonuclease_NS"/>
    <property type="match status" value="1"/>
</dbReference>
<dbReference type="SMART" id="SM00892">
    <property type="entry name" value="Endonuclease_NS"/>
    <property type="match status" value="1"/>
</dbReference>
<dbReference type="SMART" id="SM00477">
    <property type="entry name" value="NUC"/>
    <property type="match status" value="1"/>
</dbReference>
<dbReference type="SUPFAM" id="SSF54060">
    <property type="entry name" value="His-Me finger endonucleases"/>
    <property type="match status" value="1"/>
</dbReference>
<dbReference type="PROSITE" id="PS01070">
    <property type="entry name" value="NUCLEASE_NON_SPEC"/>
    <property type="match status" value="1"/>
</dbReference>